<gene>
    <name evidence="1" type="primary">lutC</name>
    <name type="ordered locus">BAA_1384</name>
</gene>
<comment type="function">
    <text evidence="1">Is involved in L-lactate degradation and allows cells to grow with lactate as the sole carbon source.</text>
</comment>
<comment type="similarity">
    <text evidence="1">Belongs to the LutC/YkgG family.</text>
</comment>
<dbReference type="EMBL" id="CP001598">
    <property type="protein sequence ID" value="ACQ47554.1"/>
    <property type="molecule type" value="Genomic_DNA"/>
</dbReference>
<dbReference type="RefSeq" id="WP_000147197.1">
    <property type="nucleotide sequence ID" value="NC_012659.1"/>
</dbReference>
<dbReference type="SMR" id="C3P4C5"/>
<dbReference type="GeneID" id="45021311"/>
<dbReference type="KEGG" id="bai:BAA_1384"/>
<dbReference type="HOGENOM" id="CLU_090664_1_0_9"/>
<dbReference type="GO" id="GO:0006089">
    <property type="term" value="P:lactate metabolic process"/>
    <property type="evidence" value="ECO:0007669"/>
    <property type="project" value="UniProtKB-UniRule"/>
</dbReference>
<dbReference type="Gene3D" id="3.40.50.10420">
    <property type="entry name" value="NagB/RpiA/CoA transferase-like"/>
    <property type="match status" value="1"/>
</dbReference>
<dbReference type="HAMAP" id="MF_02104">
    <property type="entry name" value="LutC"/>
    <property type="match status" value="1"/>
</dbReference>
<dbReference type="InterPro" id="IPR024185">
    <property type="entry name" value="FTHF_cligase-like_sf"/>
</dbReference>
<dbReference type="InterPro" id="IPR003741">
    <property type="entry name" value="LUD_dom"/>
</dbReference>
<dbReference type="InterPro" id="IPR022823">
    <property type="entry name" value="LutC"/>
</dbReference>
<dbReference type="InterPro" id="IPR037171">
    <property type="entry name" value="NagB/RpiA_transferase-like"/>
</dbReference>
<dbReference type="PANTHER" id="PTHR43682">
    <property type="entry name" value="LACTATE UTILIZATION PROTEIN C"/>
    <property type="match status" value="1"/>
</dbReference>
<dbReference type="PANTHER" id="PTHR43682:SF1">
    <property type="entry name" value="LACTATE UTILIZATION PROTEIN C"/>
    <property type="match status" value="1"/>
</dbReference>
<dbReference type="Pfam" id="PF02589">
    <property type="entry name" value="LUD_dom"/>
    <property type="match status" value="1"/>
</dbReference>
<dbReference type="SUPFAM" id="SSF100950">
    <property type="entry name" value="NagB/RpiA/CoA transferase-like"/>
    <property type="match status" value="1"/>
</dbReference>
<proteinExistence type="inferred from homology"/>
<feature type="chain" id="PRO_0000383989" description="Lactate utilization protein C">
    <location>
        <begin position="1"/>
        <end position="236"/>
    </location>
</feature>
<sequence>MTGLIQNRDSFLDNIAKELGRTRKTDGVERPVWKNNVNKETLKDYSQEELLEVFKNQCTNIHTTVVETTNDRLREDIQKVIVENGGGPIMLSADERFDSYGLTSLFKEELPKQNVEVNVWDPEKKEENMRIAERANIGIAFSDYTLAESGTIVVQSHKGQGRSLHFLPTVYFAIIPRETLVPRITQAVQDMNTRVENGEEVASCINFITGPSNSADIEMNLVVGVHGPLKAVYFIV</sequence>
<organism>
    <name type="scientific">Bacillus anthracis (strain A0248)</name>
    <dbReference type="NCBI Taxonomy" id="592021"/>
    <lineage>
        <taxon>Bacteria</taxon>
        <taxon>Bacillati</taxon>
        <taxon>Bacillota</taxon>
        <taxon>Bacilli</taxon>
        <taxon>Bacillales</taxon>
        <taxon>Bacillaceae</taxon>
        <taxon>Bacillus</taxon>
        <taxon>Bacillus cereus group</taxon>
    </lineage>
</organism>
<accession>C3P4C5</accession>
<name>LUTC_BACAA</name>
<reference key="1">
    <citation type="submission" date="2009-04" db="EMBL/GenBank/DDBJ databases">
        <title>Genome sequence of Bacillus anthracis A0248.</title>
        <authorList>
            <person name="Dodson R.J."/>
            <person name="Munk A.C."/>
            <person name="Bruce D."/>
            <person name="Detter C."/>
            <person name="Tapia R."/>
            <person name="Sutton G."/>
            <person name="Sims D."/>
            <person name="Brettin T."/>
        </authorList>
    </citation>
    <scope>NUCLEOTIDE SEQUENCE [LARGE SCALE GENOMIC DNA]</scope>
    <source>
        <strain>A0248</strain>
    </source>
</reference>
<evidence type="ECO:0000255" key="1">
    <source>
        <dbReference type="HAMAP-Rule" id="MF_02104"/>
    </source>
</evidence>
<protein>
    <recommendedName>
        <fullName evidence="1">Lactate utilization protein C</fullName>
    </recommendedName>
</protein>